<organism>
    <name type="scientific">Syntrophomonas wolfei subsp. wolfei (strain DSM 2245B / Goettingen)</name>
    <dbReference type="NCBI Taxonomy" id="335541"/>
    <lineage>
        <taxon>Bacteria</taxon>
        <taxon>Bacillati</taxon>
        <taxon>Bacillota</taxon>
        <taxon>Clostridia</taxon>
        <taxon>Eubacteriales</taxon>
        <taxon>Syntrophomonadaceae</taxon>
        <taxon>Syntrophomonas</taxon>
    </lineage>
</organism>
<evidence type="ECO:0000255" key="1">
    <source>
        <dbReference type="HAMAP-Rule" id="MF_01185"/>
    </source>
</evidence>
<name>FLIW_SYNWW</name>
<accession>Q0B0F7</accession>
<dbReference type="EMBL" id="CP000448">
    <property type="protein sequence ID" value="ABI67547.1"/>
    <property type="molecule type" value="Genomic_DNA"/>
</dbReference>
<dbReference type="RefSeq" id="WP_011639656.1">
    <property type="nucleotide sequence ID" value="NC_008346.1"/>
</dbReference>
<dbReference type="SMR" id="Q0B0F7"/>
<dbReference type="STRING" id="335541.Swol_0195"/>
<dbReference type="KEGG" id="swo:Swol_0195"/>
<dbReference type="eggNOG" id="COG1699">
    <property type="taxonomic scope" value="Bacteria"/>
</dbReference>
<dbReference type="HOGENOM" id="CLU_112356_0_2_9"/>
<dbReference type="OrthoDB" id="9801235at2"/>
<dbReference type="Proteomes" id="UP000001968">
    <property type="component" value="Chromosome"/>
</dbReference>
<dbReference type="GO" id="GO:0005737">
    <property type="term" value="C:cytoplasm"/>
    <property type="evidence" value="ECO:0007669"/>
    <property type="project" value="UniProtKB-SubCell"/>
</dbReference>
<dbReference type="GO" id="GO:0044780">
    <property type="term" value="P:bacterial-type flagellum assembly"/>
    <property type="evidence" value="ECO:0007669"/>
    <property type="project" value="UniProtKB-UniRule"/>
</dbReference>
<dbReference type="GO" id="GO:0006417">
    <property type="term" value="P:regulation of translation"/>
    <property type="evidence" value="ECO:0007669"/>
    <property type="project" value="UniProtKB-KW"/>
</dbReference>
<dbReference type="Gene3D" id="2.30.290.10">
    <property type="entry name" value="BH3618-like"/>
    <property type="match status" value="1"/>
</dbReference>
<dbReference type="HAMAP" id="MF_01185">
    <property type="entry name" value="FliW"/>
    <property type="match status" value="1"/>
</dbReference>
<dbReference type="InterPro" id="IPR003775">
    <property type="entry name" value="Flagellar_assembly_factor_FliW"/>
</dbReference>
<dbReference type="InterPro" id="IPR024046">
    <property type="entry name" value="Flagellar_assmbl_FliW_dom_sf"/>
</dbReference>
<dbReference type="NCBIfam" id="NF009793">
    <property type="entry name" value="PRK13285.1-1"/>
    <property type="match status" value="1"/>
</dbReference>
<dbReference type="PANTHER" id="PTHR39190">
    <property type="entry name" value="FLAGELLAR ASSEMBLY FACTOR FLIW"/>
    <property type="match status" value="1"/>
</dbReference>
<dbReference type="PANTHER" id="PTHR39190:SF1">
    <property type="entry name" value="FLAGELLAR ASSEMBLY FACTOR FLIW"/>
    <property type="match status" value="1"/>
</dbReference>
<dbReference type="Pfam" id="PF02623">
    <property type="entry name" value="FliW"/>
    <property type="match status" value="1"/>
</dbReference>
<dbReference type="SUPFAM" id="SSF141457">
    <property type="entry name" value="BH3618-like"/>
    <property type="match status" value="1"/>
</dbReference>
<gene>
    <name evidence="1" type="primary">fliW</name>
    <name type="ordered locus">Swol_0195</name>
</gene>
<sequence>MKIVSTLLGELEFEEEDIIMFPAGIPAFEQEKSFLLIAMGEGVPFYYLQSALNPELCLVVANPFAFFPRYSIEIGQEELQRLDCSQREELLLYVILTVPQDFRESTANLVAPLIINQESKKGLQFIATNSDYTTRHPIFQPTQAEEQTGIAAAEEG</sequence>
<comment type="function">
    <text evidence="1">Acts as an anti-CsrA protein, binds CsrA and prevents it from repressing translation of its target genes, one of which is flagellin. Binds to flagellin and participates in the assembly of the flagellum.</text>
</comment>
<comment type="subunit">
    <text evidence="1">Interacts with translational regulator CsrA and flagellin(s).</text>
</comment>
<comment type="subcellular location">
    <subcellularLocation>
        <location evidence="1">Cytoplasm</location>
    </subcellularLocation>
</comment>
<comment type="similarity">
    <text evidence="1">Belongs to the FliW family.</text>
</comment>
<proteinExistence type="inferred from homology"/>
<reference key="1">
    <citation type="journal article" date="2010" name="Environ. Microbiol.">
        <title>The genome of Syntrophomonas wolfei: new insights into syntrophic metabolism and biohydrogen production.</title>
        <authorList>
            <person name="Sieber J.R."/>
            <person name="Sims D.R."/>
            <person name="Han C."/>
            <person name="Kim E."/>
            <person name="Lykidis A."/>
            <person name="Lapidus A.L."/>
            <person name="McDonnald E."/>
            <person name="Rohlin L."/>
            <person name="Culley D.E."/>
            <person name="Gunsalus R."/>
            <person name="McInerney M.J."/>
        </authorList>
    </citation>
    <scope>NUCLEOTIDE SEQUENCE [LARGE SCALE GENOMIC DNA]</scope>
    <source>
        <strain>DSM 2245B / Goettingen</strain>
    </source>
</reference>
<feature type="chain" id="PRO_0000273009" description="Flagellar assembly factor FliW">
    <location>
        <begin position="1"/>
        <end position="156"/>
    </location>
</feature>
<keyword id="KW-1005">Bacterial flagellum biogenesis</keyword>
<keyword id="KW-0143">Chaperone</keyword>
<keyword id="KW-0963">Cytoplasm</keyword>
<keyword id="KW-1185">Reference proteome</keyword>
<keyword id="KW-0810">Translation regulation</keyword>
<protein>
    <recommendedName>
        <fullName evidence="1">Flagellar assembly factor FliW</fullName>
    </recommendedName>
</protein>